<comment type="function">
    <text evidence="1 7 8">E3 ubiquitin-protein ligase which regulates the IFN-beta production and antiviral response downstream of various DNA-encoded pattern-recognition receptors (PRRs). Also plays a central role in determining the response to different forms of oxidative stress by controlling levels of DNA glycosylases NEIL1, NEIL3 and NTH1 that are involved in repair of damaged DNA. Promotes nuclear IRF3 ubiquitination and proteasomal degradation. Bridges together TBK1 and NEMO during the innate response to viral infection leading to the activation of TBK1. Positively regulates LPS-mediated inflammatory innate immune response by catalyzing the 'Lys-11'-linked polyubiquitination of TAB1 to enhance its activation and subsequent NF-kappa-B and MAPK signaling (PubMed:34017102). In a manner independent of its catalytic activity, inhibits WWP2, a SOX2-directed E3 ubiquitin ligase, and thus protects SOX2 from polyubiquitination and proteasomal degradation. Ubiquitinates the histone acetyltransferase protein complex component PHF20 and thereby triggers its degradation in the nucleus after its recruitment by the histone demethylase KDM6B, serving as a scaffold protein. Upon induction by TGF-beta, ubiquitinates the TFIID component TAF7 for proteasomal degradation (By similarity). Induces ferroptosis by ubiquitinating SLC7A11, a critical protein for lipid reactive oxygen species (ROS) scavenging (PubMed:33869196).</text>
</comment>
<comment type="catalytic activity">
    <reaction evidence="1">
        <text>S-ubiquitinyl-[E2 ubiquitin-conjugating enzyme]-L-cysteine + [acceptor protein]-L-lysine = [E2 ubiquitin-conjugating enzyme]-L-cysteine + N(6)-ubiquitinyl-[acceptor protein]-L-lysine.</text>
        <dbReference type="EC" id="2.3.2.27"/>
    </reaction>
</comment>
<comment type="subunit">
    <text evidence="1">Interacts with TBK1; this interaction bridges together TBK1 and NEMO in order to activate TBK1. Interacts with INCA1.</text>
</comment>
<comment type="subcellular location">
    <subcellularLocation>
        <location evidence="1">Cytoplasm</location>
    </subcellularLocation>
    <subcellularLocation>
        <location evidence="1">Nucleus</location>
    </subcellularLocation>
    <text evidence="1">Viral infection mediates TRIM26 nuclear translocation.</text>
</comment>
<comment type="alternative products">
    <event type="alternative splicing"/>
    <isoform>
        <id>Q99PN3-1</id>
        <name>Alpha</name>
        <sequence type="displayed"/>
    </isoform>
    <isoform>
        <id>Q99PN3-2</id>
        <name>Beta</name>
        <sequence type="described" ref="VSP_010812 VSP_010813"/>
    </isoform>
</comment>
<comment type="PTM">
    <text evidence="1">Autoubiquitinates upon viral infection. In turn, autoubiquitinated TRIM26 recruits NEMO and bridges TBK1-NEMO interaction.</text>
</comment>
<comment type="disruption phenotype">
    <text evidence="8">TRIM26 attenuatess the production of proinflammatory cytokines in response to TLR ligands, TNF-alpha, and IL-1beta stimulation. In addition, the challenge of TRIM26-deletion mice with LPS results in inflammatory responses that are less lethal than those in wild-type mice.</text>
</comment>
<comment type="similarity">
    <text evidence="10">Belongs to the TRIM/RBCC family.</text>
</comment>
<name>TRI26_MOUSE</name>
<keyword id="KW-0025">Alternative splicing</keyword>
<keyword id="KW-0175">Coiled coil</keyword>
<keyword id="KW-0963">Cytoplasm</keyword>
<keyword id="KW-0391">Immunity</keyword>
<keyword id="KW-0399">Innate immunity</keyword>
<keyword id="KW-0479">Metal-binding</keyword>
<keyword id="KW-0539">Nucleus</keyword>
<keyword id="KW-1185">Reference proteome</keyword>
<keyword id="KW-0808">Transferase</keyword>
<keyword id="KW-0832">Ubl conjugation</keyword>
<keyword id="KW-0862">Zinc</keyword>
<keyword id="KW-0863">Zinc-finger</keyword>
<proteinExistence type="evidence at transcript level"/>
<feature type="chain" id="PRO_0000056236" description="Tripartite motif-containing protein 26">
    <location>
        <begin position="1"/>
        <end position="545"/>
    </location>
</feature>
<feature type="domain" description="B30.2/SPRY" evidence="5">
    <location>
        <begin position="301"/>
        <end position="545"/>
    </location>
</feature>
<feature type="zinc finger region" description="RING-type" evidence="4">
    <location>
        <begin position="16"/>
        <end position="57"/>
    </location>
</feature>
<feature type="zinc finger region" description="B box-type" evidence="3">
    <location>
        <begin position="97"/>
        <end position="138"/>
    </location>
</feature>
<feature type="region of interest" description="Disordered" evidence="6">
    <location>
        <begin position="382"/>
        <end position="443"/>
    </location>
</feature>
<feature type="coiled-coil region" evidence="2">
    <location>
        <begin position="197"/>
        <end position="243"/>
    </location>
</feature>
<feature type="compositionally biased region" description="Acidic residues" evidence="6">
    <location>
        <begin position="386"/>
        <end position="440"/>
    </location>
</feature>
<feature type="binding site" evidence="3">
    <location>
        <position position="102"/>
    </location>
    <ligand>
        <name>Zn(2+)</name>
        <dbReference type="ChEBI" id="CHEBI:29105"/>
    </ligand>
</feature>
<feature type="binding site" evidence="3">
    <location>
        <position position="105"/>
    </location>
    <ligand>
        <name>Zn(2+)</name>
        <dbReference type="ChEBI" id="CHEBI:29105"/>
    </ligand>
</feature>
<feature type="binding site" evidence="3">
    <location>
        <position position="124"/>
    </location>
    <ligand>
        <name>Zn(2+)</name>
        <dbReference type="ChEBI" id="CHEBI:29105"/>
    </ligand>
</feature>
<feature type="binding site" evidence="3">
    <location>
        <position position="130"/>
    </location>
    <ligand>
        <name>Zn(2+)</name>
        <dbReference type="ChEBI" id="CHEBI:29105"/>
    </ligand>
</feature>
<feature type="splice variant" id="VSP_010812" description="In isoform Beta." evidence="9">
    <original>VSVTLDPQ</original>
    <variation>DFFCPCKC</variation>
    <location>
        <begin position="319"/>
        <end position="326"/>
    </location>
</feature>
<feature type="splice variant" id="VSP_010813" description="In isoform Beta." evidence="9">
    <location>
        <begin position="327"/>
        <end position="545"/>
    </location>
</feature>
<feature type="sequence conflict" description="In Ref. 1; AAG50174/AAG50175." evidence="10" ref="1">
    <original>S</original>
    <variation>N</variation>
    <location>
        <position position="73"/>
    </location>
</feature>
<feature type="sequence conflict" description="In Ref. 1; AAG50174/AAG50175." evidence="10" ref="1">
    <original>T</original>
    <variation>A</variation>
    <location>
        <position position="259"/>
    </location>
</feature>
<feature type="sequence conflict" description="In Ref. 1; AAG50174." evidence="10" ref="1">
    <original>G</original>
    <variation>E</variation>
    <location>
        <position position="330"/>
    </location>
</feature>
<gene>
    <name type="primary">Trim26</name>
    <name type="synonym">Znf173</name>
</gene>
<protein>
    <recommendedName>
        <fullName>Tripartite motif-containing protein 26</fullName>
        <ecNumber evidence="1">2.3.2.27</ecNumber>
    </recommendedName>
    <alternativeName>
        <fullName>Zinc finger protein 173</fullName>
    </alternativeName>
</protein>
<dbReference type="EC" id="2.3.2.27" evidence="1"/>
<dbReference type="EMBL" id="AF230395">
    <property type="protein sequence ID" value="AAG50174.1"/>
    <property type="molecule type" value="mRNA"/>
</dbReference>
<dbReference type="EMBL" id="AF230396">
    <property type="protein sequence ID" value="AAG50175.1"/>
    <property type="molecule type" value="mRNA"/>
</dbReference>
<dbReference type="EMBL" id="CR956641">
    <property type="status" value="NOT_ANNOTATED_CDS"/>
    <property type="molecule type" value="Genomic_DNA"/>
</dbReference>
<dbReference type="EMBL" id="CH466559">
    <property type="protein sequence ID" value="EDL23302.1"/>
    <property type="molecule type" value="Genomic_DNA"/>
</dbReference>
<dbReference type="EMBL" id="BC037110">
    <property type="protein sequence ID" value="AAH37110.1"/>
    <property type="molecule type" value="mRNA"/>
</dbReference>
<dbReference type="EMBL" id="AK042252">
    <property type="protein sequence ID" value="BAC31204.1"/>
    <property type="molecule type" value="mRNA"/>
</dbReference>
<dbReference type="CCDS" id="CCDS37613.1">
    <molecule id="Q99PN3-1"/>
</dbReference>
<dbReference type="RefSeq" id="NP_001020770.2">
    <molecule id="Q99PN3-1"/>
    <property type="nucleotide sequence ID" value="NM_001025599.3"/>
</dbReference>
<dbReference type="RefSeq" id="NP_001273655.1">
    <molecule id="Q99PN3-1"/>
    <property type="nucleotide sequence ID" value="NM_001286726.1"/>
</dbReference>
<dbReference type="RefSeq" id="NP_001273656.1">
    <molecule id="Q99PN3-1"/>
    <property type="nucleotide sequence ID" value="NM_001286727.1"/>
</dbReference>
<dbReference type="RefSeq" id="XP_006524276.1">
    <molecule id="Q99PN3-1"/>
    <property type="nucleotide sequence ID" value="XM_006524213.4"/>
</dbReference>
<dbReference type="SMR" id="Q99PN3"/>
<dbReference type="BioGRID" id="204644">
    <property type="interactions" value="4"/>
</dbReference>
<dbReference type="FunCoup" id="Q99PN3">
    <property type="interactions" value="494"/>
</dbReference>
<dbReference type="STRING" id="10090.ENSMUSP00000060103"/>
<dbReference type="iPTMnet" id="Q99PN3"/>
<dbReference type="PhosphoSitePlus" id="Q99PN3"/>
<dbReference type="PaxDb" id="10090-ENSMUSP00000060103"/>
<dbReference type="ProteomicsDB" id="298296">
    <molecule id="Q99PN3-1"/>
</dbReference>
<dbReference type="ProteomicsDB" id="298297">
    <molecule id="Q99PN3-2"/>
</dbReference>
<dbReference type="Pumba" id="Q99PN3"/>
<dbReference type="Antibodypedia" id="26253">
    <property type="antibodies" value="130 antibodies from 22 providers"/>
</dbReference>
<dbReference type="DNASU" id="22670"/>
<dbReference type="Ensembl" id="ENSMUST00000053434.15">
    <molecule id="Q99PN3-1"/>
    <property type="protein sequence ID" value="ENSMUSP00000060103.8"/>
    <property type="gene ID" value="ENSMUSG00000024457.18"/>
</dbReference>
<dbReference type="Ensembl" id="ENSMUST00000123715.8">
    <molecule id="Q99PN3-2"/>
    <property type="protein sequence ID" value="ENSMUSP00000118438.2"/>
    <property type="gene ID" value="ENSMUSG00000024457.18"/>
</dbReference>
<dbReference type="Ensembl" id="ENSMUST00000130367.8">
    <molecule id="Q99PN3-1"/>
    <property type="protein sequence ID" value="ENSMUSP00000114896.2"/>
    <property type="gene ID" value="ENSMUSG00000024457.18"/>
</dbReference>
<dbReference type="GeneID" id="22670"/>
<dbReference type="KEGG" id="mmu:22670"/>
<dbReference type="UCSC" id="uc008clh.2">
    <molecule id="Q99PN3-1"/>
    <property type="organism name" value="mouse"/>
</dbReference>
<dbReference type="AGR" id="MGI:1337056"/>
<dbReference type="CTD" id="7726"/>
<dbReference type="MGI" id="MGI:1337056">
    <property type="gene designation" value="Trim26"/>
</dbReference>
<dbReference type="VEuPathDB" id="HostDB:ENSMUSG00000024457"/>
<dbReference type="eggNOG" id="KOG2177">
    <property type="taxonomic scope" value="Eukaryota"/>
</dbReference>
<dbReference type="GeneTree" id="ENSGT00940000158668"/>
<dbReference type="HOGENOM" id="CLU_013137_0_3_1"/>
<dbReference type="InParanoid" id="Q99PN3"/>
<dbReference type="OMA" id="PFFWLNW"/>
<dbReference type="OrthoDB" id="654191at2759"/>
<dbReference type="PhylomeDB" id="Q99PN3"/>
<dbReference type="TreeFam" id="TF342569"/>
<dbReference type="BioGRID-ORCS" id="22670">
    <property type="hits" value="2 hits in 77 CRISPR screens"/>
</dbReference>
<dbReference type="ChiTaRS" id="Trim26">
    <property type="organism name" value="mouse"/>
</dbReference>
<dbReference type="PRO" id="PR:Q99PN3"/>
<dbReference type="Proteomes" id="UP000000589">
    <property type="component" value="Chromosome 17"/>
</dbReference>
<dbReference type="RNAct" id="Q99PN3">
    <property type="molecule type" value="protein"/>
</dbReference>
<dbReference type="Bgee" id="ENSMUSG00000024457">
    <property type="expression patterns" value="Expressed in humerus cartilage element and 258 other cell types or tissues"/>
</dbReference>
<dbReference type="ExpressionAtlas" id="Q99PN3">
    <property type="expression patterns" value="baseline and differential"/>
</dbReference>
<dbReference type="GO" id="GO:0005737">
    <property type="term" value="C:cytoplasm"/>
    <property type="evidence" value="ECO:0000314"/>
    <property type="project" value="MGI"/>
</dbReference>
<dbReference type="GO" id="GO:0005634">
    <property type="term" value="C:nucleus"/>
    <property type="evidence" value="ECO:0007669"/>
    <property type="project" value="UniProtKB-SubCell"/>
</dbReference>
<dbReference type="GO" id="GO:0061630">
    <property type="term" value="F:ubiquitin protein ligase activity"/>
    <property type="evidence" value="ECO:0007669"/>
    <property type="project" value="Ensembl"/>
</dbReference>
<dbReference type="GO" id="GO:0008270">
    <property type="term" value="F:zinc ion binding"/>
    <property type="evidence" value="ECO:0007669"/>
    <property type="project" value="UniProtKB-KW"/>
</dbReference>
<dbReference type="GO" id="GO:0046597">
    <property type="term" value="P:host-mediated suppression of symbiont invasion"/>
    <property type="evidence" value="ECO:0007669"/>
    <property type="project" value="Ensembl"/>
</dbReference>
<dbReference type="GO" id="GO:1901224">
    <property type="term" value="P:positive regulation of non-canonical NF-kappaB signal transduction"/>
    <property type="evidence" value="ECO:0007669"/>
    <property type="project" value="Ensembl"/>
</dbReference>
<dbReference type="GO" id="GO:0043161">
    <property type="term" value="P:proteasome-mediated ubiquitin-dependent protein catabolic process"/>
    <property type="evidence" value="ECO:0007669"/>
    <property type="project" value="Ensembl"/>
</dbReference>
<dbReference type="GO" id="GO:0070979">
    <property type="term" value="P:protein K11-linked ubiquitination"/>
    <property type="evidence" value="ECO:0007669"/>
    <property type="project" value="Ensembl"/>
</dbReference>
<dbReference type="GO" id="GO:0044790">
    <property type="term" value="P:suppression of viral release by host"/>
    <property type="evidence" value="ECO:0007669"/>
    <property type="project" value="Ensembl"/>
</dbReference>
<dbReference type="CDD" id="cd19765">
    <property type="entry name" value="Bbox2_TRIM10-like"/>
    <property type="match status" value="1"/>
</dbReference>
<dbReference type="CDD" id="cd16598">
    <property type="entry name" value="RING-HC_TRIM26_C-IV"/>
    <property type="match status" value="1"/>
</dbReference>
<dbReference type="CDD" id="cd15826">
    <property type="entry name" value="SPRY_PRY_TRIM15"/>
    <property type="match status" value="1"/>
</dbReference>
<dbReference type="FunFam" id="2.60.120.920:FF:000039">
    <property type="entry name" value="Tripartite motif-containing protein 26"/>
    <property type="match status" value="1"/>
</dbReference>
<dbReference type="FunFam" id="3.30.160.60:FF:001212">
    <property type="entry name" value="Tripartite motif-containing protein 26"/>
    <property type="match status" value="1"/>
</dbReference>
<dbReference type="Gene3D" id="2.60.120.920">
    <property type="match status" value="2"/>
</dbReference>
<dbReference type="Gene3D" id="3.30.160.60">
    <property type="entry name" value="Classic Zinc Finger"/>
    <property type="match status" value="1"/>
</dbReference>
<dbReference type="Gene3D" id="3.30.40.10">
    <property type="entry name" value="Zinc/RING finger domain, C3HC4 (zinc finger)"/>
    <property type="match status" value="1"/>
</dbReference>
<dbReference type="InterPro" id="IPR001870">
    <property type="entry name" value="B30.2/SPRY"/>
</dbReference>
<dbReference type="InterPro" id="IPR043136">
    <property type="entry name" value="B30.2/SPRY_sf"/>
</dbReference>
<dbReference type="InterPro" id="IPR003879">
    <property type="entry name" value="Butyrophylin_SPRY"/>
</dbReference>
<dbReference type="InterPro" id="IPR013320">
    <property type="entry name" value="ConA-like_dom_sf"/>
</dbReference>
<dbReference type="InterPro" id="IPR006574">
    <property type="entry name" value="PRY"/>
</dbReference>
<dbReference type="InterPro" id="IPR003877">
    <property type="entry name" value="SPRY_dom"/>
</dbReference>
<dbReference type="InterPro" id="IPR050143">
    <property type="entry name" value="TRIM/RBCC"/>
</dbReference>
<dbReference type="InterPro" id="IPR000315">
    <property type="entry name" value="Znf_B-box"/>
</dbReference>
<dbReference type="InterPro" id="IPR001841">
    <property type="entry name" value="Znf_RING"/>
</dbReference>
<dbReference type="InterPro" id="IPR013083">
    <property type="entry name" value="Znf_RING/FYVE/PHD"/>
</dbReference>
<dbReference type="PANTHER" id="PTHR24103">
    <property type="entry name" value="E3 UBIQUITIN-PROTEIN LIGASE TRIM"/>
    <property type="match status" value="1"/>
</dbReference>
<dbReference type="Pfam" id="PF13765">
    <property type="entry name" value="PRY"/>
    <property type="match status" value="1"/>
</dbReference>
<dbReference type="Pfam" id="PF00622">
    <property type="entry name" value="SPRY"/>
    <property type="match status" value="1"/>
</dbReference>
<dbReference type="Pfam" id="PF00643">
    <property type="entry name" value="zf-B_box"/>
    <property type="match status" value="1"/>
</dbReference>
<dbReference type="Pfam" id="PF15227">
    <property type="entry name" value="zf-C3HC4_4"/>
    <property type="match status" value="1"/>
</dbReference>
<dbReference type="PRINTS" id="PR01407">
    <property type="entry name" value="BUTYPHLNCDUF"/>
</dbReference>
<dbReference type="SMART" id="SM00336">
    <property type="entry name" value="BBOX"/>
    <property type="match status" value="1"/>
</dbReference>
<dbReference type="SMART" id="SM00589">
    <property type="entry name" value="PRY"/>
    <property type="match status" value="1"/>
</dbReference>
<dbReference type="SMART" id="SM00184">
    <property type="entry name" value="RING"/>
    <property type="match status" value="1"/>
</dbReference>
<dbReference type="SMART" id="SM00449">
    <property type="entry name" value="SPRY"/>
    <property type="match status" value="1"/>
</dbReference>
<dbReference type="SUPFAM" id="SSF57845">
    <property type="entry name" value="B-box zinc-binding domain"/>
    <property type="match status" value="1"/>
</dbReference>
<dbReference type="SUPFAM" id="SSF49899">
    <property type="entry name" value="Concanavalin A-like lectins/glucanases"/>
    <property type="match status" value="2"/>
</dbReference>
<dbReference type="SUPFAM" id="SSF57850">
    <property type="entry name" value="RING/U-box"/>
    <property type="match status" value="1"/>
</dbReference>
<dbReference type="PROSITE" id="PS50188">
    <property type="entry name" value="B302_SPRY"/>
    <property type="match status" value="1"/>
</dbReference>
<dbReference type="PROSITE" id="PS50119">
    <property type="entry name" value="ZF_BBOX"/>
    <property type="match status" value="1"/>
</dbReference>
<dbReference type="PROSITE" id="PS50089">
    <property type="entry name" value="ZF_RING_2"/>
    <property type="match status" value="1"/>
</dbReference>
<evidence type="ECO:0000250" key="1">
    <source>
        <dbReference type="UniProtKB" id="Q12899"/>
    </source>
</evidence>
<evidence type="ECO:0000255" key="2"/>
<evidence type="ECO:0000255" key="3">
    <source>
        <dbReference type="PROSITE-ProRule" id="PRU00024"/>
    </source>
</evidence>
<evidence type="ECO:0000255" key="4">
    <source>
        <dbReference type="PROSITE-ProRule" id="PRU00175"/>
    </source>
</evidence>
<evidence type="ECO:0000255" key="5">
    <source>
        <dbReference type="PROSITE-ProRule" id="PRU00548"/>
    </source>
</evidence>
<evidence type="ECO:0000256" key="6">
    <source>
        <dbReference type="SAM" id="MobiDB-lite"/>
    </source>
</evidence>
<evidence type="ECO:0000269" key="7">
    <source>
    </source>
</evidence>
<evidence type="ECO:0000269" key="8">
    <source>
    </source>
</evidence>
<evidence type="ECO:0000303" key="9">
    <source ref="1"/>
</evidence>
<evidence type="ECO:0000305" key="10"/>
<reference key="1">
    <citation type="submission" date="2000-02" db="EMBL/GenBank/DDBJ databases">
        <title>Deciphering the function of the tripartite motif containing proteins.</title>
        <authorList>
            <person name="Reymond A."/>
            <person name="Meroni G."/>
        </authorList>
    </citation>
    <scope>NUCLEOTIDE SEQUENCE [MRNA] (ISOFORMS ALPHA AND BETA)</scope>
</reference>
<reference key="2">
    <citation type="journal article" date="2009" name="PLoS Biol.">
        <title>Lineage-specific biology revealed by a finished genome assembly of the mouse.</title>
        <authorList>
            <person name="Church D.M."/>
            <person name="Goodstadt L."/>
            <person name="Hillier L.W."/>
            <person name="Zody M.C."/>
            <person name="Goldstein S."/>
            <person name="She X."/>
            <person name="Bult C.J."/>
            <person name="Agarwala R."/>
            <person name="Cherry J.L."/>
            <person name="DiCuccio M."/>
            <person name="Hlavina W."/>
            <person name="Kapustin Y."/>
            <person name="Meric P."/>
            <person name="Maglott D."/>
            <person name="Birtle Z."/>
            <person name="Marques A.C."/>
            <person name="Graves T."/>
            <person name="Zhou S."/>
            <person name="Teague B."/>
            <person name="Potamousis K."/>
            <person name="Churas C."/>
            <person name="Place M."/>
            <person name="Herschleb J."/>
            <person name="Runnheim R."/>
            <person name="Forrest D."/>
            <person name="Amos-Landgraf J."/>
            <person name="Schwartz D.C."/>
            <person name="Cheng Z."/>
            <person name="Lindblad-Toh K."/>
            <person name="Eichler E.E."/>
            <person name="Ponting C.P."/>
        </authorList>
    </citation>
    <scope>NUCLEOTIDE SEQUENCE [LARGE SCALE GENOMIC DNA]</scope>
    <source>
        <strain>C57BL/6J</strain>
    </source>
</reference>
<reference key="3">
    <citation type="submission" date="2005-07" db="EMBL/GenBank/DDBJ databases">
        <authorList>
            <person name="Mural R.J."/>
            <person name="Adams M.D."/>
            <person name="Myers E.W."/>
            <person name="Smith H.O."/>
            <person name="Venter J.C."/>
        </authorList>
    </citation>
    <scope>NUCLEOTIDE SEQUENCE [LARGE SCALE GENOMIC DNA]</scope>
</reference>
<reference key="4">
    <citation type="journal article" date="2004" name="Genome Res.">
        <title>The status, quality, and expansion of the NIH full-length cDNA project: the Mammalian Gene Collection (MGC).</title>
        <authorList>
            <consortium name="The MGC Project Team"/>
        </authorList>
    </citation>
    <scope>NUCLEOTIDE SEQUENCE [LARGE SCALE MRNA] (ISOFORM ALPHA)</scope>
    <source>
        <tissue>Retina</tissue>
    </source>
</reference>
<reference key="5">
    <citation type="journal article" date="2005" name="Science">
        <title>The transcriptional landscape of the mammalian genome.</title>
        <authorList>
            <person name="Carninci P."/>
            <person name="Kasukawa T."/>
            <person name="Katayama S."/>
            <person name="Gough J."/>
            <person name="Frith M.C."/>
            <person name="Maeda N."/>
            <person name="Oyama R."/>
            <person name="Ravasi T."/>
            <person name="Lenhard B."/>
            <person name="Wells C."/>
            <person name="Kodzius R."/>
            <person name="Shimokawa K."/>
            <person name="Bajic V.B."/>
            <person name="Brenner S.E."/>
            <person name="Batalov S."/>
            <person name="Forrest A.R."/>
            <person name="Zavolan M."/>
            <person name="Davis M.J."/>
            <person name="Wilming L.G."/>
            <person name="Aidinis V."/>
            <person name="Allen J.E."/>
            <person name="Ambesi-Impiombato A."/>
            <person name="Apweiler R."/>
            <person name="Aturaliya R.N."/>
            <person name="Bailey T.L."/>
            <person name="Bansal M."/>
            <person name="Baxter L."/>
            <person name="Beisel K.W."/>
            <person name="Bersano T."/>
            <person name="Bono H."/>
            <person name="Chalk A.M."/>
            <person name="Chiu K.P."/>
            <person name="Choudhary V."/>
            <person name="Christoffels A."/>
            <person name="Clutterbuck D.R."/>
            <person name="Crowe M.L."/>
            <person name="Dalla E."/>
            <person name="Dalrymple B.P."/>
            <person name="de Bono B."/>
            <person name="Della Gatta G."/>
            <person name="di Bernardo D."/>
            <person name="Down T."/>
            <person name="Engstrom P."/>
            <person name="Fagiolini M."/>
            <person name="Faulkner G."/>
            <person name="Fletcher C.F."/>
            <person name="Fukushima T."/>
            <person name="Furuno M."/>
            <person name="Futaki S."/>
            <person name="Gariboldi M."/>
            <person name="Georgii-Hemming P."/>
            <person name="Gingeras T.R."/>
            <person name="Gojobori T."/>
            <person name="Green R.E."/>
            <person name="Gustincich S."/>
            <person name="Harbers M."/>
            <person name="Hayashi Y."/>
            <person name="Hensch T.K."/>
            <person name="Hirokawa N."/>
            <person name="Hill D."/>
            <person name="Huminiecki L."/>
            <person name="Iacono M."/>
            <person name="Ikeo K."/>
            <person name="Iwama A."/>
            <person name="Ishikawa T."/>
            <person name="Jakt M."/>
            <person name="Kanapin A."/>
            <person name="Katoh M."/>
            <person name="Kawasawa Y."/>
            <person name="Kelso J."/>
            <person name="Kitamura H."/>
            <person name="Kitano H."/>
            <person name="Kollias G."/>
            <person name="Krishnan S.P."/>
            <person name="Kruger A."/>
            <person name="Kummerfeld S.K."/>
            <person name="Kurochkin I.V."/>
            <person name="Lareau L.F."/>
            <person name="Lazarevic D."/>
            <person name="Lipovich L."/>
            <person name="Liu J."/>
            <person name="Liuni S."/>
            <person name="McWilliam S."/>
            <person name="Madan Babu M."/>
            <person name="Madera M."/>
            <person name="Marchionni L."/>
            <person name="Matsuda H."/>
            <person name="Matsuzawa S."/>
            <person name="Miki H."/>
            <person name="Mignone F."/>
            <person name="Miyake S."/>
            <person name="Morris K."/>
            <person name="Mottagui-Tabar S."/>
            <person name="Mulder N."/>
            <person name="Nakano N."/>
            <person name="Nakauchi H."/>
            <person name="Ng P."/>
            <person name="Nilsson R."/>
            <person name="Nishiguchi S."/>
            <person name="Nishikawa S."/>
            <person name="Nori F."/>
            <person name="Ohara O."/>
            <person name="Okazaki Y."/>
            <person name="Orlando V."/>
            <person name="Pang K.C."/>
            <person name="Pavan W.J."/>
            <person name="Pavesi G."/>
            <person name="Pesole G."/>
            <person name="Petrovsky N."/>
            <person name="Piazza S."/>
            <person name="Reed J."/>
            <person name="Reid J.F."/>
            <person name="Ring B.Z."/>
            <person name="Ringwald M."/>
            <person name="Rost B."/>
            <person name="Ruan Y."/>
            <person name="Salzberg S.L."/>
            <person name="Sandelin A."/>
            <person name="Schneider C."/>
            <person name="Schoenbach C."/>
            <person name="Sekiguchi K."/>
            <person name="Semple C.A."/>
            <person name="Seno S."/>
            <person name="Sessa L."/>
            <person name="Sheng Y."/>
            <person name="Shibata Y."/>
            <person name="Shimada H."/>
            <person name="Shimada K."/>
            <person name="Silva D."/>
            <person name="Sinclair B."/>
            <person name="Sperling S."/>
            <person name="Stupka E."/>
            <person name="Sugiura K."/>
            <person name="Sultana R."/>
            <person name="Takenaka Y."/>
            <person name="Taki K."/>
            <person name="Tammoja K."/>
            <person name="Tan S.L."/>
            <person name="Tang S."/>
            <person name="Taylor M.S."/>
            <person name="Tegner J."/>
            <person name="Teichmann S.A."/>
            <person name="Ueda H.R."/>
            <person name="van Nimwegen E."/>
            <person name="Verardo R."/>
            <person name="Wei C.L."/>
            <person name="Yagi K."/>
            <person name="Yamanishi H."/>
            <person name="Zabarovsky E."/>
            <person name="Zhu S."/>
            <person name="Zimmer A."/>
            <person name="Hide W."/>
            <person name="Bult C."/>
            <person name="Grimmond S.M."/>
            <person name="Teasdale R.D."/>
            <person name="Liu E.T."/>
            <person name="Brusic V."/>
            <person name="Quackenbush J."/>
            <person name="Wahlestedt C."/>
            <person name="Mattick J.S."/>
            <person name="Hume D.A."/>
            <person name="Kai C."/>
            <person name="Sasaki D."/>
            <person name="Tomaru Y."/>
            <person name="Fukuda S."/>
            <person name="Kanamori-Katayama M."/>
            <person name="Suzuki M."/>
            <person name="Aoki J."/>
            <person name="Arakawa T."/>
            <person name="Iida J."/>
            <person name="Imamura K."/>
            <person name="Itoh M."/>
            <person name="Kato T."/>
            <person name="Kawaji H."/>
            <person name="Kawagashira N."/>
            <person name="Kawashima T."/>
            <person name="Kojima M."/>
            <person name="Kondo S."/>
            <person name="Konno H."/>
            <person name="Nakano K."/>
            <person name="Ninomiya N."/>
            <person name="Nishio T."/>
            <person name="Okada M."/>
            <person name="Plessy C."/>
            <person name="Shibata K."/>
            <person name="Shiraki T."/>
            <person name="Suzuki S."/>
            <person name="Tagami M."/>
            <person name="Waki K."/>
            <person name="Watahiki A."/>
            <person name="Okamura-Oho Y."/>
            <person name="Suzuki H."/>
            <person name="Kawai J."/>
            <person name="Hayashizaki Y."/>
        </authorList>
    </citation>
    <scope>NUCLEOTIDE SEQUENCE [LARGE SCALE MRNA] OF 1-394</scope>
    <source>
        <strain>C57BL/6J</strain>
        <tissue>Thymus</tissue>
    </source>
</reference>
<reference key="6">
    <citation type="journal article" date="2021" name="Front. Cell Dev. Biol.">
        <title>TRIM26 Induces Ferroptosis to Inhibit Hepatic Stellate Cell Activation and Mitigate Liver Fibrosis Through Mediating SLC7A11 Ubiquitination.</title>
        <authorList>
            <person name="Zhu Y."/>
            <person name="Zhang C."/>
            <person name="Huang M."/>
            <person name="Lin J."/>
            <person name="Fan X."/>
            <person name="Ni T."/>
        </authorList>
    </citation>
    <scope>FUNCTION</scope>
</reference>
<reference key="7">
    <citation type="journal article" date="2021" name="Cell Death Differ.">
        <title>TRIM26 positively regulates the inflammatory immune response through K11-linked ubiquitination of TAB1.</title>
        <authorList>
            <person name="Zhao J."/>
            <person name="Cai B."/>
            <person name="Shao Z."/>
            <person name="Zhang L."/>
            <person name="Zheng Y."/>
            <person name="Ma C."/>
            <person name="Yi F."/>
            <person name="Liu B."/>
            <person name="Gao C."/>
        </authorList>
    </citation>
    <scope>FUNCTION</scope>
    <scope>DISRUPTION PHENOTYPE</scope>
</reference>
<sequence>MAVSAPLRSLEEEVTCSICLDYLRDPVTIDCGHVFCRSCTSDIRPISGNRPVCPLCKKPFKKENIRPVWQLASLVENIERLKVDNGRQPGELAREPQDMKLCERHQEKLHYYCEDDGKLLCVMCRESREHRPHTAVLVEKAALPHREKILNHLNTLRRDRDKIQGFQAKGEADILAALTKLQEQRQYIVAEFKQGHQFLKKREQHLLDQLATLEQLLTEGREKFKTRGVSELDRLTLVISELEGKARQPAAELMQDVCTTQDTKDFANKYPRKKFWIGKAIPHMVKRKAGEFSDKLLSLQRGLRQFQGKLLRDLEYKTVSVTLDPQSASGYLHLSEDWKCVTYTGQYQSDCLLPQQFDCEPGVLGSKGFTWGKVYWEVELEREGWSEDEEEGEEEEEGEEEEEDEEVGYGDGYEDWETDEEDESLGEEEEEEEEEEEEVQESCMVGVAKDSVKRKGDLSLRPEDGVWALRLSPSGIWANTSPEAQLFPVLRPRRVGIALDYEGGTVTFTNAESQELIYTFTTTFTRRLVPFLWLKWPGARLLLRP</sequence>
<organism>
    <name type="scientific">Mus musculus</name>
    <name type="common">Mouse</name>
    <dbReference type="NCBI Taxonomy" id="10090"/>
    <lineage>
        <taxon>Eukaryota</taxon>
        <taxon>Metazoa</taxon>
        <taxon>Chordata</taxon>
        <taxon>Craniata</taxon>
        <taxon>Vertebrata</taxon>
        <taxon>Euteleostomi</taxon>
        <taxon>Mammalia</taxon>
        <taxon>Eutheria</taxon>
        <taxon>Euarchontoglires</taxon>
        <taxon>Glires</taxon>
        <taxon>Rodentia</taxon>
        <taxon>Myomorpha</taxon>
        <taxon>Muroidea</taxon>
        <taxon>Muridae</taxon>
        <taxon>Murinae</taxon>
        <taxon>Mus</taxon>
        <taxon>Mus</taxon>
    </lineage>
</organism>
<accession>Q99PN3</accession>
<accession>B8JJ55</accession>
<accession>Q8C9E9</accession>
<accession>Q8JZT7</accession>
<accession>Q99PN2</accession>